<protein>
    <recommendedName>
        <fullName evidence="1">Orotidine 5'-phosphate decarboxylase</fullName>
        <ecNumber evidence="1">4.1.1.23</ecNumber>
    </recommendedName>
    <alternativeName>
        <fullName evidence="1">OMP decarboxylase</fullName>
        <shortName evidence="1">OMPDCase</shortName>
        <shortName evidence="1">OMPdecase</shortName>
    </alternativeName>
</protein>
<accession>Q6HET1</accession>
<organism>
    <name type="scientific">Bacillus thuringiensis subsp. konkukian (strain 97-27)</name>
    <dbReference type="NCBI Taxonomy" id="281309"/>
    <lineage>
        <taxon>Bacteria</taxon>
        <taxon>Bacillati</taxon>
        <taxon>Bacillota</taxon>
        <taxon>Bacilli</taxon>
        <taxon>Bacillales</taxon>
        <taxon>Bacillaceae</taxon>
        <taxon>Bacillus</taxon>
        <taxon>Bacillus cereus group</taxon>
    </lineage>
</organism>
<feature type="chain" id="PRO_0000241848" description="Orotidine 5'-phosphate decarboxylase">
    <location>
        <begin position="1"/>
        <end position="238"/>
    </location>
</feature>
<feature type="active site" description="Proton donor" evidence="1">
    <location>
        <position position="61"/>
    </location>
</feature>
<feature type="binding site" evidence="1">
    <location>
        <position position="10"/>
    </location>
    <ligand>
        <name>substrate</name>
    </ligand>
</feature>
<feature type="binding site" evidence="1">
    <location>
        <position position="32"/>
    </location>
    <ligand>
        <name>substrate</name>
    </ligand>
</feature>
<feature type="binding site" evidence="1">
    <location>
        <begin position="59"/>
        <end position="68"/>
    </location>
    <ligand>
        <name>substrate</name>
    </ligand>
</feature>
<feature type="binding site" evidence="1">
    <location>
        <position position="122"/>
    </location>
    <ligand>
        <name>substrate</name>
    </ligand>
</feature>
<feature type="binding site" evidence="1">
    <location>
        <position position="184"/>
    </location>
    <ligand>
        <name>substrate</name>
    </ligand>
</feature>
<feature type="binding site" evidence="1">
    <location>
        <position position="193"/>
    </location>
    <ligand>
        <name>substrate</name>
    </ligand>
</feature>
<feature type="binding site" evidence="1">
    <location>
        <position position="213"/>
    </location>
    <ligand>
        <name>substrate</name>
    </ligand>
</feature>
<feature type="binding site" evidence="1">
    <location>
        <position position="214"/>
    </location>
    <ligand>
        <name>substrate</name>
    </ligand>
</feature>
<proteinExistence type="inferred from homology"/>
<gene>
    <name evidence="1" type="primary">pyrF</name>
    <name type="ordered locus">BT9727_3625</name>
</gene>
<sequence length="238" mass="26228">MSQSLIVALDFPGKQDVEQFLRHFEGEELFVKVGMELFYKEGPAIITYLKEKGHKIFLDLKLHDIPNTVKSAMRSLASLDVDMVNVHAAGGSSMMKAAIEGLEEGKQEGKERPICIAVTQLTSTSETMMKKEIGIEKTLEEAVAHYAKLTKESGLDGVVCSTLEVPKLREVCGNEFVTVTPGIRLASDDVNDQVRVATPKRARELGSSYIVVGRSITKAENPLEAYKTVKQQWEGVTV</sequence>
<keyword id="KW-0210">Decarboxylase</keyword>
<keyword id="KW-0456">Lyase</keyword>
<keyword id="KW-0665">Pyrimidine biosynthesis</keyword>
<name>PYRF_BACHK</name>
<dbReference type="EC" id="4.1.1.23" evidence="1"/>
<dbReference type="EMBL" id="AE017355">
    <property type="protein sequence ID" value="AAT61598.1"/>
    <property type="molecule type" value="Genomic_DNA"/>
</dbReference>
<dbReference type="RefSeq" id="WP_000083500.1">
    <property type="nucleotide sequence ID" value="NC_005957.1"/>
</dbReference>
<dbReference type="RefSeq" id="YP_037945.1">
    <property type="nucleotide sequence ID" value="NC_005957.1"/>
</dbReference>
<dbReference type="SMR" id="Q6HET1"/>
<dbReference type="KEGG" id="btk:BT9727_3625"/>
<dbReference type="PATRIC" id="fig|281309.8.peg.3863"/>
<dbReference type="HOGENOM" id="CLU_067069_1_1_9"/>
<dbReference type="UniPathway" id="UPA00070">
    <property type="reaction ID" value="UER00120"/>
</dbReference>
<dbReference type="Proteomes" id="UP000001301">
    <property type="component" value="Chromosome"/>
</dbReference>
<dbReference type="GO" id="GO:0005829">
    <property type="term" value="C:cytosol"/>
    <property type="evidence" value="ECO:0007669"/>
    <property type="project" value="TreeGrafter"/>
</dbReference>
<dbReference type="GO" id="GO:0004590">
    <property type="term" value="F:orotidine-5'-phosphate decarboxylase activity"/>
    <property type="evidence" value="ECO:0007669"/>
    <property type="project" value="UniProtKB-UniRule"/>
</dbReference>
<dbReference type="GO" id="GO:0006207">
    <property type="term" value="P:'de novo' pyrimidine nucleobase biosynthetic process"/>
    <property type="evidence" value="ECO:0007669"/>
    <property type="project" value="InterPro"/>
</dbReference>
<dbReference type="GO" id="GO:0044205">
    <property type="term" value="P:'de novo' UMP biosynthetic process"/>
    <property type="evidence" value="ECO:0007669"/>
    <property type="project" value="UniProtKB-UniRule"/>
</dbReference>
<dbReference type="CDD" id="cd04725">
    <property type="entry name" value="OMP_decarboxylase_like"/>
    <property type="match status" value="1"/>
</dbReference>
<dbReference type="FunFam" id="3.20.20.70:FF:000015">
    <property type="entry name" value="Orotidine 5'-phosphate decarboxylase"/>
    <property type="match status" value="1"/>
</dbReference>
<dbReference type="Gene3D" id="3.20.20.70">
    <property type="entry name" value="Aldolase class I"/>
    <property type="match status" value="1"/>
</dbReference>
<dbReference type="HAMAP" id="MF_01200_B">
    <property type="entry name" value="OMPdecase_type1_B"/>
    <property type="match status" value="1"/>
</dbReference>
<dbReference type="InterPro" id="IPR013785">
    <property type="entry name" value="Aldolase_TIM"/>
</dbReference>
<dbReference type="InterPro" id="IPR014732">
    <property type="entry name" value="OMPdecase"/>
</dbReference>
<dbReference type="InterPro" id="IPR018089">
    <property type="entry name" value="OMPdecase_AS"/>
</dbReference>
<dbReference type="InterPro" id="IPR047596">
    <property type="entry name" value="OMPdecase_bac"/>
</dbReference>
<dbReference type="InterPro" id="IPR001754">
    <property type="entry name" value="OMPdeCOase_dom"/>
</dbReference>
<dbReference type="InterPro" id="IPR011060">
    <property type="entry name" value="RibuloseP-bd_barrel"/>
</dbReference>
<dbReference type="NCBIfam" id="NF001273">
    <property type="entry name" value="PRK00230.1"/>
    <property type="match status" value="1"/>
</dbReference>
<dbReference type="NCBIfam" id="TIGR01740">
    <property type="entry name" value="pyrF"/>
    <property type="match status" value="1"/>
</dbReference>
<dbReference type="PANTHER" id="PTHR32119">
    <property type="entry name" value="OROTIDINE 5'-PHOSPHATE DECARBOXYLASE"/>
    <property type="match status" value="1"/>
</dbReference>
<dbReference type="PANTHER" id="PTHR32119:SF2">
    <property type="entry name" value="OROTIDINE 5'-PHOSPHATE DECARBOXYLASE"/>
    <property type="match status" value="1"/>
</dbReference>
<dbReference type="Pfam" id="PF00215">
    <property type="entry name" value="OMPdecase"/>
    <property type="match status" value="1"/>
</dbReference>
<dbReference type="SMART" id="SM00934">
    <property type="entry name" value="OMPdecase"/>
    <property type="match status" value="1"/>
</dbReference>
<dbReference type="SUPFAM" id="SSF51366">
    <property type="entry name" value="Ribulose-phoshate binding barrel"/>
    <property type="match status" value="1"/>
</dbReference>
<dbReference type="PROSITE" id="PS00156">
    <property type="entry name" value="OMPDECASE"/>
    <property type="match status" value="1"/>
</dbReference>
<evidence type="ECO:0000255" key="1">
    <source>
        <dbReference type="HAMAP-Rule" id="MF_01200"/>
    </source>
</evidence>
<comment type="function">
    <text evidence="1">Catalyzes the decarboxylation of orotidine 5'-monophosphate (OMP) to uridine 5'-monophosphate (UMP).</text>
</comment>
<comment type="catalytic activity">
    <reaction evidence="1">
        <text>orotidine 5'-phosphate + H(+) = UMP + CO2</text>
        <dbReference type="Rhea" id="RHEA:11596"/>
        <dbReference type="ChEBI" id="CHEBI:15378"/>
        <dbReference type="ChEBI" id="CHEBI:16526"/>
        <dbReference type="ChEBI" id="CHEBI:57538"/>
        <dbReference type="ChEBI" id="CHEBI:57865"/>
        <dbReference type="EC" id="4.1.1.23"/>
    </reaction>
</comment>
<comment type="pathway">
    <text evidence="1">Pyrimidine metabolism; UMP biosynthesis via de novo pathway; UMP from orotate: step 2/2.</text>
</comment>
<comment type="subunit">
    <text evidence="1">Homodimer.</text>
</comment>
<comment type="similarity">
    <text evidence="1">Belongs to the OMP decarboxylase family. Type 1 subfamily.</text>
</comment>
<reference key="1">
    <citation type="journal article" date="2006" name="J. Bacteriol.">
        <title>Pathogenomic sequence analysis of Bacillus cereus and Bacillus thuringiensis isolates closely related to Bacillus anthracis.</title>
        <authorList>
            <person name="Han C.S."/>
            <person name="Xie G."/>
            <person name="Challacombe J.F."/>
            <person name="Altherr M.R."/>
            <person name="Bhotika S.S."/>
            <person name="Bruce D."/>
            <person name="Campbell C.S."/>
            <person name="Campbell M.L."/>
            <person name="Chen J."/>
            <person name="Chertkov O."/>
            <person name="Cleland C."/>
            <person name="Dimitrijevic M."/>
            <person name="Doggett N.A."/>
            <person name="Fawcett J.J."/>
            <person name="Glavina T."/>
            <person name="Goodwin L.A."/>
            <person name="Hill K.K."/>
            <person name="Hitchcock P."/>
            <person name="Jackson P.J."/>
            <person name="Keim P."/>
            <person name="Kewalramani A.R."/>
            <person name="Longmire J."/>
            <person name="Lucas S."/>
            <person name="Malfatti S."/>
            <person name="McMurry K."/>
            <person name="Meincke L.J."/>
            <person name="Misra M."/>
            <person name="Moseman B.L."/>
            <person name="Mundt M."/>
            <person name="Munk A.C."/>
            <person name="Okinaka R.T."/>
            <person name="Parson-Quintana B."/>
            <person name="Reilly L.P."/>
            <person name="Richardson P."/>
            <person name="Robinson D.L."/>
            <person name="Rubin E."/>
            <person name="Saunders E."/>
            <person name="Tapia R."/>
            <person name="Tesmer J.G."/>
            <person name="Thayer N."/>
            <person name="Thompson L.S."/>
            <person name="Tice H."/>
            <person name="Ticknor L.O."/>
            <person name="Wills P.L."/>
            <person name="Brettin T.S."/>
            <person name="Gilna P."/>
        </authorList>
    </citation>
    <scope>NUCLEOTIDE SEQUENCE [LARGE SCALE GENOMIC DNA]</scope>
    <source>
        <strain>97-27</strain>
    </source>
</reference>